<organism>
    <name type="scientific">Arabidopsis thaliana</name>
    <name type="common">Mouse-ear cress</name>
    <dbReference type="NCBI Taxonomy" id="3702"/>
    <lineage>
        <taxon>Eukaryota</taxon>
        <taxon>Viridiplantae</taxon>
        <taxon>Streptophyta</taxon>
        <taxon>Embryophyta</taxon>
        <taxon>Tracheophyta</taxon>
        <taxon>Spermatophyta</taxon>
        <taxon>Magnoliopsida</taxon>
        <taxon>eudicotyledons</taxon>
        <taxon>Gunneridae</taxon>
        <taxon>Pentapetalae</taxon>
        <taxon>rosids</taxon>
        <taxon>malvids</taxon>
        <taxon>Brassicales</taxon>
        <taxon>Brassicaceae</taxon>
        <taxon>Camelineae</taxon>
        <taxon>Arabidopsis</taxon>
    </lineage>
</organism>
<feature type="transit peptide" description="Mitochondrion" evidence="1">
    <location>
        <begin position="1"/>
        <end position="100"/>
    </location>
</feature>
<feature type="chain" id="PRO_0000342850" description="Pentatricopeptide repeat-containing protein At1g68980, mitochondrial">
    <location>
        <begin position="101"/>
        <end position="619"/>
    </location>
</feature>
<feature type="repeat" description="PPR 1">
    <location>
        <begin position="186"/>
        <end position="221"/>
    </location>
</feature>
<feature type="repeat" description="PPR 2">
    <location>
        <begin position="222"/>
        <end position="256"/>
    </location>
</feature>
<feature type="repeat" description="PPR 3">
    <location>
        <begin position="257"/>
        <end position="292"/>
    </location>
</feature>
<feature type="repeat" description="PPR 4">
    <location>
        <begin position="295"/>
        <end position="329"/>
    </location>
</feature>
<feature type="repeat" description="PPR 5">
    <location>
        <begin position="366"/>
        <end position="400"/>
    </location>
</feature>
<feature type="repeat" description="PPR 6">
    <location>
        <begin position="401"/>
        <end position="435"/>
    </location>
</feature>
<feature type="repeat" description="PPR 7">
    <location>
        <begin position="436"/>
        <end position="466"/>
    </location>
</feature>
<feature type="repeat" description="PPR 8">
    <location>
        <begin position="472"/>
        <end position="506"/>
    </location>
</feature>
<feature type="repeat" description="PPR 9">
    <location>
        <begin position="507"/>
        <end position="541"/>
    </location>
</feature>
<feature type="repeat" description="PPR 10">
    <location>
        <begin position="542"/>
        <end position="576"/>
    </location>
</feature>
<comment type="subcellular location">
    <subcellularLocation>
        <location evidence="2">Mitochondrion</location>
    </subcellularLocation>
</comment>
<comment type="similarity">
    <text evidence="2">Belongs to the PPR family. P subfamily.</text>
</comment>
<comment type="online information" name="Pentatricopeptide repeat proteins">
    <link uri="https://ppr.plantenergy.uwa.edu.au"/>
</comment>
<gene>
    <name type="ordered locus">At1g68980</name>
    <name type="ORF">T6L1.16</name>
</gene>
<evidence type="ECO:0000255" key="1"/>
<evidence type="ECO:0000305" key="2"/>
<name>PP109_ARATH</name>
<dbReference type="EMBL" id="AC011665">
    <property type="protein sequence ID" value="AAG51590.1"/>
    <property type="molecule type" value="Genomic_DNA"/>
</dbReference>
<dbReference type="EMBL" id="CP002684">
    <property type="protein sequence ID" value="AEE34872.1"/>
    <property type="molecule type" value="Genomic_DNA"/>
</dbReference>
<dbReference type="EMBL" id="AK226281">
    <property type="protein sequence ID" value="BAE98440.1"/>
    <property type="molecule type" value="mRNA"/>
</dbReference>
<dbReference type="PIR" id="C96714">
    <property type="entry name" value="C96714"/>
</dbReference>
<dbReference type="RefSeq" id="NP_177062.1">
    <property type="nucleotide sequence ID" value="NM_105570.3"/>
</dbReference>
<dbReference type="SMR" id="Q9CAA5"/>
<dbReference type="FunCoup" id="Q9CAA5">
    <property type="interactions" value="1208"/>
</dbReference>
<dbReference type="STRING" id="3702.Q9CAA5"/>
<dbReference type="PaxDb" id="3702-AT1G68980.1"/>
<dbReference type="ProteomicsDB" id="250487"/>
<dbReference type="EnsemblPlants" id="AT1G68980.1">
    <property type="protein sequence ID" value="AT1G68980.1"/>
    <property type="gene ID" value="AT1G68980"/>
</dbReference>
<dbReference type="GeneID" id="843231"/>
<dbReference type="Gramene" id="AT1G68980.1">
    <property type="protein sequence ID" value="AT1G68980.1"/>
    <property type="gene ID" value="AT1G68980"/>
</dbReference>
<dbReference type="KEGG" id="ath:AT1G68980"/>
<dbReference type="Araport" id="AT1G68980"/>
<dbReference type="TAIR" id="AT1G68980"/>
<dbReference type="eggNOG" id="ENOG502QSBB">
    <property type="taxonomic scope" value="Eukaryota"/>
</dbReference>
<dbReference type="HOGENOM" id="CLU_008969_1_1_1"/>
<dbReference type="InParanoid" id="Q9CAA5"/>
<dbReference type="OMA" id="KSHDWNS"/>
<dbReference type="PhylomeDB" id="Q9CAA5"/>
<dbReference type="PRO" id="PR:Q9CAA5"/>
<dbReference type="Proteomes" id="UP000006548">
    <property type="component" value="Chromosome 1"/>
</dbReference>
<dbReference type="ExpressionAtlas" id="Q9CAA5">
    <property type="expression patterns" value="baseline and differential"/>
</dbReference>
<dbReference type="GO" id="GO:0005739">
    <property type="term" value="C:mitochondrion"/>
    <property type="evidence" value="ECO:0007669"/>
    <property type="project" value="UniProtKB-SubCell"/>
</dbReference>
<dbReference type="Gene3D" id="1.25.40.10">
    <property type="entry name" value="Tetratricopeptide repeat domain"/>
    <property type="match status" value="3"/>
</dbReference>
<dbReference type="InterPro" id="IPR002885">
    <property type="entry name" value="Pentatricopeptide_rpt"/>
</dbReference>
<dbReference type="InterPro" id="IPR011990">
    <property type="entry name" value="TPR-like_helical_dom_sf"/>
</dbReference>
<dbReference type="NCBIfam" id="TIGR00756">
    <property type="entry name" value="PPR"/>
    <property type="match status" value="2"/>
</dbReference>
<dbReference type="PANTHER" id="PTHR46598">
    <property type="entry name" value="BNAC05G43320D PROTEIN"/>
    <property type="match status" value="1"/>
</dbReference>
<dbReference type="PANTHER" id="PTHR46598:SF4">
    <property type="entry name" value="PENTACOTRIPEPTIDE-REPEAT REGION OF PRORP DOMAIN-CONTAINING PROTEIN"/>
    <property type="match status" value="1"/>
</dbReference>
<dbReference type="Pfam" id="PF01535">
    <property type="entry name" value="PPR"/>
    <property type="match status" value="1"/>
</dbReference>
<dbReference type="Pfam" id="PF13041">
    <property type="entry name" value="PPR_2"/>
    <property type="match status" value="2"/>
</dbReference>
<dbReference type="Pfam" id="PF25245">
    <property type="entry name" value="TPR_At1g68980"/>
    <property type="match status" value="1"/>
</dbReference>
<dbReference type="PROSITE" id="PS51375">
    <property type="entry name" value="PPR"/>
    <property type="match status" value="9"/>
</dbReference>
<proteinExistence type="evidence at transcript level"/>
<reference key="1">
    <citation type="journal article" date="2000" name="Nature">
        <title>Sequence and analysis of chromosome 1 of the plant Arabidopsis thaliana.</title>
        <authorList>
            <person name="Theologis A."/>
            <person name="Ecker J.R."/>
            <person name="Palm C.J."/>
            <person name="Federspiel N.A."/>
            <person name="Kaul S."/>
            <person name="White O."/>
            <person name="Alonso J."/>
            <person name="Altafi H."/>
            <person name="Araujo R."/>
            <person name="Bowman C.L."/>
            <person name="Brooks S.Y."/>
            <person name="Buehler E."/>
            <person name="Chan A."/>
            <person name="Chao Q."/>
            <person name="Chen H."/>
            <person name="Cheuk R.F."/>
            <person name="Chin C.W."/>
            <person name="Chung M.K."/>
            <person name="Conn L."/>
            <person name="Conway A.B."/>
            <person name="Conway A.R."/>
            <person name="Creasy T.H."/>
            <person name="Dewar K."/>
            <person name="Dunn P."/>
            <person name="Etgu P."/>
            <person name="Feldblyum T.V."/>
            <person name="Feng J.-D."/>
            <person name="Fong B."/>
            <person name="Fujii C.Y."/>
            <person name="Gill J.E."/>
            <person name="Goldsmith A.D."/>
            <person name="Haas B."/>
            <person name="Hansen N.F."/>
            <person name="Hughes B."/>
            <person name="Huizar L."/>
            <person name="Hunter J.L."/>
            <person name="Jenkins J."/>
            <person name="Johnson-Hopson C."/>
            <person name="Khan S."/>
            <person name="Khaykin E."/>
            <person name="Kim C.J."/>
            <person name="Koo H.L."/>
            <person name="Kremenetskaia I."/>
            <person name="Kurtz D.B."/>
            <person name="Kwan A."/>
            <person name="Lam B."/>
            <person name="Langin-Hooper S."/>
            <person name="Lee A."/>
            <person name="Lee J.M."/>
            <person name="Lenz C.A."/>
            <person name="Li J.H."/>
            <person name="Li Y.-P."/>
            <person name="Lin X."/>
            <person name="Liu S.X."/>
            <person name="Liu Z.A."/>
            <person name="Luros J.S."/>
            <person name="Maiti R."/>
            <person name="Marziali A."/>
            <person name="Militscher J."/>
            <person name="Miranda M."/>
            <person name="Nguyen M."/>
            <person name="Nierman W.C."/>
            <person name="Osborne B.I."/>
            <person name="Pai G."/>
            <person name="Peterson J."/>
            <person name="Pham P.K."/>
            <person name="Rizzo M."/>
            <person name="Rooney T."/>
            <person name="Rowley D."/>
            <person name="Sakano H."/>
            <person name="Salzberg S.L."/>
            <person name="Schwartz J.R."/>
            <person name="Shinn P."/>
            <person name="Southwick A.M."/>
            <person name="Sun H."/>
            <person name="Tallon L.J."/>
            <person name="Tambunga G."/>
            <person name="Toriumi M.J."/>
            <person name="Town C.D."/>
            <person name="Utterback T."/>
            <person name="Van Aken S."/>
            <person name="Vaysberg M."/>
            <person name="Vysotskaia V.S."/>
            <person name="Walker M."/>
            <person name="Wu D."/>
            <person name="Yu G."/>
            <person name="Fraser C.M."/>
            <person name="Venter J.C."/>
            <person name="Davis R.W."/>
        </authorList>
    </citation>
    <scope>NUCLEOTIDE SEQUENCE [LARGE SCALE GENOMIC DNA]</scope>
    <source>
        <strain>cv. Columbia</strain>
    </source>
</reference>
<reference key="2">
    <citation type="journal article" date="2017" name="Plant J.">
        <title>Araport11: a complete reannotation of the Arabidopsis thaliana reference genome.</title>
        <authorList>
            <person name="Cheng C.Y."/>
            <person name="Krishnakumar V."/>
            <person name="Chan A.P."/>
            <person name="Thibaud-Nissen F."/>
            <person name="Schobel S."/>
            <person name="Town C.D."/>
        </authorList>
    </citation>
    <scope>GENOME REANNOTATION</scope>
    <source>
        <strain>cv. Columbia</strain>
    </source>
</reference>
<reference key="3">
    <citation type="submission" date="2006-07" db="EMBL/GenBank/DDBJ databases">
        <title>Large-scale analysis of RIKEN Arabidopsis full-length (RAFL) cDNAs.</title>
        <authorList>
            <person name="Totoki Y."/>
            <person name="Seki M."/>
            <person name="Ishida J."/>
            <person name="Nakajima M."/>
            <person name="Enju A."/>
            <person name="Kamiya A."/>
            <person name="Narusaka M."/>
            <person name="Shin-i T."/>
            <person name="Nakagawa M."/>
            <person name="Sakamoto N."/>
            <person name="Oishi K."/>
            <person name="Kohara Y."/>
            <person name="Kobayashi M."/>
            <person name="Toyoda A."/>
            <person name="Sakaki Y."/>
            <person name="Sakurai T."/>
            <person name="Iida K."/>
            <person name="Akiyama K."/>
            <person name="Satou M."/>
            <person name="Toyoda T."/>
            <person name="Konagaya A."/>
            <person name="Carninci P."/>
            <person name="Kawai J."/>
            <person name="Hayashizaki Y."/>
            <person name="Shinozaki K."/>
        </authorList>
    </citation>
    <scope>NUCLEOTIDE SEQUENCE [LARGE SCALE MRNA]</scope>
    <source>
        <strain>cv. Columbia</strain>
    </source>
</reference>
<reference key="4">
    <citation type="journal article" date="2004" name="Plant Cell">
        <title>Genome-wide analysis of Arabidopsis pentatricopeptide repeat proteins reveals their essential role in organelle biogenesis.</title>
        <authorList>
            <person name="Lurin C."/>
            <person name="Andres C."/>
            <person name="Aubourg S."/>
            <person name="Bellaoui M."/>
            <person name="Bitton F."/>
            <person name="Bruyere C."/>
            <person name="Caboche M."/>
            <person name="Debast C."/>
            <person name="Gualberto J."/>
            <person name="Hoffmann B."/>
            <person name="Lecharny A."/>
            <person name="Le Ret M."/>
            <person name="Martin-Magniette M.-L."/>
            <person name="Mireau H."/>
            <person name="Peeters N."/>
            <person name="Renou J.-P."/>
            <person name="Szurek B."/>
            <person name="Taconnat L."/>
            <person name="Small I."/>
        </authorList>
    </citation>
    <scope>GENE FAMILY</scope>
</reference>
<protein>
    <recommendedName>
        <fullName>Pentatricopeptide repeat-containing protein At1g68980, mitochondrial</fullName>
    </recommendedName>
</protein>
<keyword id="KW-0496">Mitochondrion</keyword>
<keyword id="KW-1185">Reference proteome</keyword>
<keyword id="KW-0677">Repeat</keyword>
<keyword id="KW-0809">Transit peptide</keyword>
<accession>Q9CAA5</accession>
<sequence>MLRKTLTLISLRRPFSSIPSKTLTPHQKSSFESTLHHSLITHDTDQAWKVFRSFAAASSLPDKRLLNSLITHLSSFHNTDQNTSLRHRLKRAFVSTTYVIEKDPILLEFETVRTVLESMKLAKASGPALALVECMFKNRYFVPFDLWGDLLIDVCRENGSLAAFLKVFRESCRIAVDEKLDFMKPDLVASNAALEACCRQMESLADAENLIESMDVLGVKPDELSFGFLAYLYARKGLREKISELEDLMDGLGFASRRILYSSMISGYVKSGDLDSASDVILCSLKGVGEASSFSEETYCELVRGFIESKSVESLAKLIIEAQKLESMSTDVGGSVGFGIVNACVKLGFSGKSILDELNAQGGSGGIGVYVPILKAYCKEGRTSEATQLVTEISSSGLQLDVETYNTMIEASMTKHDFLSALTLFRDMRETRVADLKRCYLTIMTGLLENQRPELMAEFVEEVMEDPRVEVKSHDWNSIIHAFCKSGRLGDAKSTFRRMTFLQYEPNNQTYLSLINGYVSCEKYFEVVVIWKEFKDKKAKLEHALADAFLNALVKGGFFGTALQVIEKCQEMKIFVDKWRYKATFMETQKNLRLPKLRKRKMKKIEFLDAFKNWARITT</sequence>